<organism>
    <name type="scientific">Buchnera aphidicola subsp. Acyrthosiphon pisum (strain APS)</name>
    <name type="common">Acyrthosiphon pisum symbiotic bacterium</name>
    <dbReference type="NCBI Taxonomy" id="107806"/>
    <lineage>
        <taxon>Bacteria</taxon>
        <taxon>Pseudomonadati</taxon>
        <taxon>Pseudomonadota</taxon>
        <taxon>Gammaproteobacteria</taxon>
        <taxon>Enterobacterales</taxon>
        <taxon>Erwiniaceae</taxon>
        <taxon>Buchnera</taxon>
    </lineage>
</organism>
<proteinExistence type="inferred from homology"/>
<dbReference type="EC" id="3.2.2.9" evidence="1"/>
<dbReference type="EMBL" id="BA000003">
    <property type="protein sequence ID" value="BAB12927.1"/>
    <property type="molecule type" value="Genomic_DNA"/>
</dbReference>
<dbReference type="RefSeq" id="NP_240041.1">
    <property type="nucleotide sequence ID" value="NC_002528.1"/>
</dbReference>
<dbReference type="RefSeq" id="WP_010896005.1">
    <property type="nucleotide sequence ID" value="NC_002528.1"/>
</dbReference>
<dbReference type="SMR" id="P57306"/>
<dbReference type="STRING" id="563178.BUAP5A_207"/>
<dbReference type="EnsemblBacteria" id="BAB12927">
    <property type="protein sequence ID" value="BAB12927"/>
    <property type="gene ID" value="BAB12927"/>
</dbReference>
<dbReference type="KEGG" id="buc:BU210"/>
<dbReference type="PATRIC" id="fig|107806.10.peg.222"/>
<dbReference type="eggNOG" id="COG0775">
    <property type="taxonomic scope" value="Bacteria"/>
</dbReference>
<dbReference type="HOGENOM" id="CLU_031248_2_2_6"/>
<dbReference type="UniPathway" id="UPA00904">
    <property type="reaction ID" value="UER00871"/>
</dbReference>
<dbReference type="Proteomes" id="UP000001806">
    <property type="component" value="Chromosome"/>
</dbReference>
<dbReference type="GO" id="GO:0005829">
    <property type="term" value="C:cytosol"/>
    <property type="evidence" value="ECO:0007669"/>
    <property type="project" value="TreeGrafter"/>
</dbReference>
<dbReference type="GO" id="GO:0008782">
    <property type="term" value="F:adenosylhomocysteine nucleosidase activity"/>
    <property type="evidence" value="ECO:0007669"/>
    <property type="project" value="UniProtKB-UniRule"/>
</dbReference>
<dbReference type="GO" id="GO:0008930">
    <property type="term" value="F:methylthioadenosine nucleosidase activity"/>
    <property type="evidence" value="ECO:0007669"/>
    <property type="project" value="UniProtKB-UniRule"/>
</dbReference>
<dbReference type="GO" id="GO:0019509">
    <property type="term" value="P:L-methionine salvage from methylthioadenosine"/>
    <property type="evidence" value="ECO:0007669"/>
    <property type="project" value="UniProtKB-UniRule"/>
</dbReference>
<dbReference type="GO" id="GO:0019284">
    <property type="term" value="P:L-methionine salvage from S-adenosylmethionine"/>
    <property type="evidence" value="ECO:0007669"/>
    <property type="project" value="TreeGrafter"/>
</dbReference>
<dbReference type="GO" id="GO:0046124">
    <property type="term" value="P:purine deoxyribonucleoside catabolic process"/>
    <property type="evidence" value="ECO:0007669"/>
    <property type="project" value="UniProtKB-UniRule"/>
</dbReference>
<dbReference type="CDD" id="cd09008">
    <property type="entry name" value="MTAN"/>
    <property type="match status" value="1"/>
</dbReference>
<dbReference type="Gene3D" id="3.40.50.1580">
    <property type="entry name" value="Nucleoside phosphorylase domain"/>
    <property type="match status" value="1"/>
</dbReference>
<dbReference type="HAMAP" id="MF_01684">
    <property type="entry name" value="Salvage_MtnN"/>
    <property type="match status" value="1"/>
</dbReference>
<dbReference type="InterPro" id="IPR010049">
    <property type="entry name" value="MTA_SAH_Nsdase"/>
</dbReference>
<dbReference type="InterPro" id="IPR000845">
    <property type="entry name" value="Nucleoside_phosphorylase_d"/>
</dbReference>
<dbReference type="InterPro" id="IPR035994">
    <property type="entry name" value="Nucleoside_phosphorylase_sf"/>
</dbReference>
<dbReference type="NCBIfam" id="TIGR01704">
    <property type="entry name" value="MTA_SAH-Nsdase"/>
    <property type="match status" value="1"/>
</dbReference>
<dbReference type="NCBIfam" id="NF004079">
    <property type="entry name" value="PRK05584.1"/>
    <property type="match status" value="1"/>
</dbReference>
<dbReference type="PANTHER" id="PTHR46832">
    <property type="entry name" value="5'-METHYLTHIOADENOSINE/S-ADENOSYLHOMOCYSTEINE NUCLEOSIDASE"/>
    <property type="match status" value="1"/>
</dbReference>
<dbReference type="PANTHER" id="PTHR46832:SF1">
    <property type="entry name" value="5'-METHYLTHIOADENOSINE_S-ADENOSYLHOMOCYSTEINE NUCLEOSIDASE"/>
    <property type="match status" value="1"/>
</dbReference>
<dbReference type="Pfam" id="PF01048">
    <property type="entry name" value="PNP_UDP_1"/>
    <property type="match status" value="1"/>
</dbReference>
<dbReference type="SUPFAM" id="SSF53167">
    <property type="entry name" value="Purine and uridine phosphorylases"/>
    <property type="match status" value="1"/>
</dbReference>
<accession>P57306</accession>
<evidence type="ECO:0000255" key="1">
    <source>
        <dbReference type="HAMAP-Rule" id="MF_01684"/>
    </source>
</evidence>
<sequence>MKIGIIGAINQETERLKKIIHFYIEKKINTYKIYIGKFKSHDVFLIKSGIGKVSASVATMILIDLYKPDTIINSGSAGSLQSFLKIGDIIIPKKTCYYDVDLTNFGYTRGQIPGYPKEFTVNEKICNFFKKNADKYQLKYIKGLILSGDTFVRENESIKILKKQFPSAIAVEMESSAIAQVCYKFNIPLIIIKSISDESDNNATVNFKENIDFVSYQLSKFVKIILENLIDM</sequence>
<gene>
    <name evidence="1" type="primary">mtnN</name>
    <name type="synonym">mtn</name>
    <name type="ordered locus">BU210</name>
</gene>
<name>MTNN_BUCAI</name>
<feature type="chain" id="PRO_0000164436" description="5'-methylthioadenosine/S-adenosylhomocysteine nucleosidase">
    <location>
        <begin position="1"/>
        <end position="232"/>
    </location>
</feature>
<feature type="active site" description="Proton acceptor" evidence="1">
    <location>
        <position position="12"/>
    </location>
</feature>
<feature type="active site" description="Proton donor" evidence="1">
    <location>
        <position position="197"/>
    </location>
</feature>
<feature type="binding site" evidence="1">
    <location>
        <position position="78"/>
    </location>
    <ligand>
        <name>substrate</name>
    </ligand>
</feature>
<feature type="binding site" evidence="1">
    <location>
        <position position="152"/>
    </location>
    <ligand>
        <name>substrate</name>
    </ligand>
</feature>
<feature type="binding site" evidence="1">
    <location>
        <begin position="173"/>
        <end position="174"/>
    </location>
    <ligand>
        <name>substrate</name>
    </ligand>
</feature>
<comment type="function">
    <text evidence="1">Catalyzes the irreversible cleavage of the glycosidic bond in both 5'-methylthioadenosine (MTA) and S-adenosylhomocysteine (SAH/AdoHcy) to adenine and the corresponding thioribose, 5'-methylthioribose and S-ribosylhomocysteine, respectively. Also cleaves 5'-deoxyadenosine, a toxic by-product of radical S-adenosylmethionine (SAM) enzymes, into 5-deoxyribose and adenine. Thus, is required for in vivo function of the radical SAM enzymes biotin synthase and lipoic acid synthase, that are inhibited by 5'-deoxyadenosine accumulation.</text>
</comment>
<comment type="catalytic activity">
    <reaction evidence="1">
        <text>S-adenosyl-L-homocysteine + H2O = S-(5-deoxy-D-ribos-5-yl)-L-homocysteine + adenine</text>
        <dbReference type="Rhea" id="RHEA:17805"/>
        <dbReference type="ChEBI" id="CHEBI:15377"/>
        <dbReference type="ChEBI" id="CHEBI:16708"/>
        <dbReference type="ChEBI" id="CHEBI:57856"/>
        <dbReference type="ChEBI" id="CHEBI:58195"/>
        <dbReference type="EC" id="3.2.2.9"/>
    </reaction>
</comment>
<comment type="catalytic activity">
    <reaction evidence="1">
        <text>S-methyl-5'-thioadenosine + H2O = 5-(methylsulfanyl)-D-ribose + adenine</text>
        <dbReference type="Rhea" id="RHEA:13617"/>
        <dbReference type="ChEBI" id="CHEBI:15377"/>
        <dbReference type="ChEBI" id="CHEBI:16708"/>
        <dbReference type="ChEBI" id="CHEBI:17509"/>
        <dbReference type="ChEBI" id="CHEBI:78440"/>
        <dbReference type="EC" id="3.2.2.9"/>
    </reaction>
</comment>
<comment type="catalytic activity">
    <reaction evidence="1">
        <text>5'-deoxyadenosine + H2O = 5-deoxy-D-ribose + adenine</text>
        <dbReference type="Rhea" id="RHEA:29859"/>
        <dbReference type="ChEBI" id="CHEBI:15377"/>
        <dbReference type="ChEBI" id="CHEBI:16708"/>
        <dbReference type="ChEBI" id="CHEBI:17319"/>
        <dbReference type="ChEBI" id="CHEBI:149540"/>
        <dbReference type="EC" id="3.2.2.9"/>
    </reaction>
    <physiologicalReaction direction="left-to-right" evidence="1">
        <dbReference type="Rhea" id="RHEA:29860"/>
    </physiologicalReaction>
</comment>
<comment type="pathway">
    <text evidence="1">Amino-acid biosynthesis; L-methionine biosynthesis via salvage pathway; S-methyl-5-thio-alpha-D-ribose 1-phosphate from S-methyl-5'-thioadenosine (hydrolase route): step 1/2.</text>
</comment>
<comment type="subunit">
    <text evidence="1">Homodimer.</text>
</comment>
<comment type="similarity">
    <text evidence="1">Belongs to the PNP/UDP phosphorylase family. MtnN subfamily.</text>
</comment>
<keyword id="KW-0028">Amino-acid biosynthesis</keyword>
<keyword id="KW-0378">Hydrolase</keyword>
<keyword id="KW-0486">Methionine biosynthesis</keyword>
<keyword id="KW-1185">Reference proteome</keyword>
<protein>
    <recommendedName>
        <fullName evidence="1">5'-methylthioadenosine/S-adenosylhomocysteine nucleosidase</fullName>
        <shortName evidence="1">MTA/SAH nucleosidase</shortName>
        <shortName evidence="1">MTAN</shortName>
        <ecNumber evidence="1">3.2.2.9</ecNumber>
    </recommendedName>
    <alternativeName>
        <fullName evidence="1">5'-deoxyadenosine nucleosidase</fullName>
        <shortName evidence="1">DOA nucleosidase</shortName>
        <shortName evidence="1">dAdo nucleosidase</shortName>
    </alternativeName>
    <alternativeName>
        <fullName evidence="1">5'-methylthioadenosine nucleosidase</fullName>
        <shortName evidence="1">MTA nucleosidase</shortName>
    </alternativeName>
    <alternativeName>
        <fullName evidence="1">S-adenosylhomocysteine nucleosidase</fullName>
        <shortName evidence="1">AdoHcy nucleosidase</shortName>
        <shortName evidence="1">SAH nucleosidase</shortName>
        <shortName evidence="1">SRH nucleosidase</shortName>
    </alternativeName>
</protein>
<reference key="1">
    <citation type="journal article" date="2000" name="Nature">
        <title>Genome sequence of the endocellular bacterial symbiont of aphids Buchnera sp. APS.</title>
        <authorList>
            <person name="Shigenobu S."/>
            <person name="Watanabe H."/>
            <person name="Hattori M."/>
            <person name="Sakaki Y."/>
            <person name="Ishikawa H."/>
        </authorList>
    </citation>
    <scope>NUCLEOTIDE SEQUENCE [LARGE SCALE GENOMIC DNA]</scope>
    <source>
        <strain>APS</strain>
    </source>
</reference>